<accession>A7X013</accession>
<protein>
    <recommendedName>
        <fullName evidence="1">3-dehydroquinate dehydratase</fullName>
        <shortName evidence="1">3-dehydroquinase</shortName>
        <ecNumber evidence="1">4.2.1.10</ecNumber>
    </recommendedName>
    <alternativeName>
        <fullName evidence="1">Type I DHQase</fullName>
    </alternativeName>
    <alternativeName>
        <fullName evidence="1">Type I dehydroquinase</fullName>
        <shortName evidence="1">DHQ1</shortName>
    </alternativeName>
</protein>
<gene>
    <name evidence="1" type="primary">aroD</name>
    <name type="ordered locus">SAHV_0825</name>
</gene>
<proteinExistence type="inferred from homology"/>
<keyword id="KW-0028">Amino-acid biosynthesis</keyword>
<keyword id="KW-0057">Aromatic amino acid biosynthesis</keyword>
<keyword id="KW-0456">Lyase</keyword>
<keyword id="KW-0704">Schiff base</keyword>
<organism>
    <name type="scientific">Staphylococcus aureus (strain Mu3 / ATCC 700698)</name>
    <dbReference type="NCBI Taxonomy" id="418127"/>
    <lineage>
        <taxon>Bacteria</taxon>
        <taxon>Bacillati</taxon>
        <taxon>Bacillota</taxon>
        <taxon>Bacilli</taxon>
        <taxon>Bacillales</taxon>
        <taxon>Staphylococcaceae</taxon>
        <taxon>Staphylococcus</taxon>
    </lineage>
</organism>
<reference key="1">
    <citation type="journal article" date="2008" name="Antimicrob. Agents Chemother.">
        <title>Mutated response regulator graR is responsible for phenotypic conversion of Staphylococcus aureus from heterogeneous vancomycin-intermediate resistance to vancomycin-intermediate resistance.</title>
        <authorList>
            <person name="Neoh H.-M."/>
            <person name="Cui L."/>
            <person name="Yuzawa H."/>
            <person name="Takeuchi F."/>
            <person name="Matsuo M."/>
            <person name="Hiramatsu K."/>
        </authorList>
    </citation>
    <scope>NUCLEOTIDE SEQUENCE [LARGE SCALE GENOMIC DNA]</scope>
    <source>
        <strain>Mu3 / ATCC 700698</strain>
    </source>
</reference>
<name>AROD_STAA1</name>
<sequence>MTHVEVVATIAPQLSIEETLIQKINHRIDAIDVLELRIDQIENVTVDQVAEMITKLKVMQDSFKLLVTYRTKLQGGYGQFINDLYLNLISDLANINGIDMIDIEWQADIDIEKHQRIIKHLQQYNKEVVISHHNFESTPPLDELQFIFFKMQKFNPEYVKLAVMPHNKNDVLNLLQAMSTFSDTMDCKVVGISMSKLGLISRTAQGVFGGALTYGCIGEPQAPGQIDVTDLKAQVTLY</sequence>
<dbReference type="EC" id="4.2.1.10" evidence="1"/>
<dbReference type="EMBL" id="AP009324">
    <property type="protein sequence ID" value="BAF77708.1"/>
    <property type="molecule type" value="Genomic_DNA"/>
</dbReference>
<dbReference type="RefSeq" id="WP_000150011.1">
    <property type="nucleotide sequence ID" value="NC_009782.1"/>
</dbReference>
<dbReference type="SMR" id="A7X013"/>
<dbReference type="KEGG" id="saw:SAHV_0825"/>
<dbReference type="HOGENOM" id="CLU_064444_2_1_9"/>
<dbReference type="UniPathway" id="UPA00053">
    <property type="reaction ID" value="UER00086"/>
</dbReference>
<dbReference type="GO" id="GO:0003855">
    <property type="term" value="F:3-dehydroquinate dehydratase activity"/>
    <property type="evidence" value="ECO:0007669"/>
    <property type="project" value="UniProtKB-UniRule"/>
</dbReference>
<dbReference type="GO" id="GO:0046279">
    <property type="term" value="P:3,4-dihydroxybenzoate biosynthetic process"/>
    <property type="evidence" value="ECO:0007669"/>
    <property type="project" value="TreeGrafter"/>
</dbReference>
<dbReference type="GO" id="GO:0008652">
    <property type="term" value="P:amino acid biosynthetic process"/>
    <property type="evidence" value="ECO:0007669"/>
    <property type="project" value="UniProtKB-KW"/>
</dbReference>
<dbReference type="GO" id="GO:0009073">
    <property type="term" value="P:aromatic amino acid family biosynthetic process"/>
    <property type="evidence" value="ECO:0007669"/>
    <property type="project" value="UniProtKB-KW"/>
</dbReference>
<dbReference type="GO" id="GO:0009423">
    <property type="term" value="P:chorismate biosynthetic process"/>
    <property type="evidence" value="ECO:0007669"/>
    <property type="project" value="UniProtKB-UniRule"/>
</dbReference>
<dbReference type="CDD" id="cd00502">
    <property type="entry name" value="DHQase_I"/>
    <property type="match status" value="1"/>
</dbReference>
<dbReference type="FunFam" id="3.20.20.70:FF:000216">
    <property type="entry name" value="3-dehydroquinate dehydratase"/>
    <property type="match status" value="1"/>
</dbReference>
<dbReference type="Gene3D" id="3.20.20.70">
    <property type="entry name" value="Aldolase class I"/>
    <property type="match status" value="1"/>
</dbReference>
<dbReference type="HAMAP" id="MF_00214">
    <property type="entry name" value="AroD"/>
    <property type="match status" value="1"/>
</dbReference>
<dbReference type="InterPro" id="IPR013785">
    <property type="entry name" value="Aldolase_TIM"/>
</dbReference>
<dbReference type="InterPro" id="IPR001381">
    <property type="entry name" value="DHquinase_I"/>
</dbReference>
<dbReference type="InterPro" id="IPR050146">
    <property type="entry name" value="Type-I_3-dehydroquinase"/>
</dbReference>
<dbReference type="NCBIfam" id="TIGR01093">
    <property type="entry name" value="aroD"/>
    <property type="match status" value="1"/>
</dbReference>
<dbReference type="PANTHER" id="PTHR43699">
    <property type="entry name" value="3-DEHYDROQUINATE DEHYDRATASE"/>
    <property type="match status" value="1"/>
</dbReference>
<dbReference type="PANTHER" id="PTHR43699:SF1">
    <property type="entry name" value="3-DEHYDROQUINATE DEHYDRATASE"/>
    <property type="match status" value="1"/>
</dbReference>
<dbReference type="Pfam" id="PF01487">
    <property type="entry name" value="DHquinase_I"/>
    <property type="match status" value="1"/>
</dbReference>
<dbReference type="SUPFAM" id="SSF51569">
    <property type="entry name" value="Aldolase"/>
    <property type="match status" value="1"/>
</dbReference>
<comment type="function">
    <text evidence="1">Involved in the third step of the chorismate pathway, which leads to the biosynthesis of aromatic amino acids. Catalyzes the cis-dehydration of 3-dehydroquinate (DHQ) and introduces the first double bond of the aromatic ring to yield 3-dehydroshikimate.</text>
</comment>
<comment type="catalytic activity">
    <reaction evidence="1">
        <text>3-dehydroquinate = 3-dehydroshikimate + H2O</text>
        <dbReference type="Rhea" id="RHEA:21096"/>
        <dbReference type="ChEBI" id="CHEBI:15377"/>
        <dbReference type="ChEBI" id="CHEBI:16630"/>
        <dbReference type="ChEBI" id="CHEBI:32364"/>
        <dbReference type="EC" id="4.2.1.10"/>
    </reaction>
</comment>
<comment type="pathway">
    <text evidence="1">Metabolic intermediate biosynthesis; chorismate biosynthesis; chorismate from D-erythrose 4-phosphate and phosphoenolpyruvate: step 3/7.</text>
</comment>
<comment type="subunit">
    <text evidence="1">Homodimer.</text>
</comment>
<comment type="similarity">
    <text evidence="1">Belongs to the type-I 3-dehydroquinase family.</text>
</comment>
<feature type="chain" id="PRO_1000043185" description="3-dehydroquinate dehydratase">
    <location>
        <begin position="1"/>
        <end position="238"/>
    </location>
</feature>
<feature type="active site" description="Proton donor/acceptor" evidence="1">
    <location>
        <position position="133"/>
    </location>
</feature>
<feature type="active site" description="Schiff-base intermediate with substrate" evidence="1">
    <location>
        <position position="160"/>
    </location>
</feature>
<feature type="binding site" evidence="1">
    <location>
        <begin position="35"/>
        <end position="37"/>
    </location>
    <ligand>
        <name>3-dehydroquinate</name>
        <dbReference type="ChEBI" id="CHEBI:32364"/>
    </ligand>
</feature>
<feature type="binding site" evidence="1">
    <location>
        <position position="70"/>
    </location>
    <ligand>
        <name>3-dehydroquinate</name>
        <dbReference type="ChEBI" id="CHEBI:32364"/>
    </ligand>
</feature>
<feature type="binding site" evidence="1">
    <location>
        <position position="202"/>
    </location>
    <ligand>
        <name>3-dehydroquinate</name>
        <dbReference type="ChEBI" id="CHEBI:32364"/>
    </ligand>
</feature>
<feature type="binding site" evidence="1">
    <location>
        <position position="225"/>
    </location>
    <ligand>
        <name>3-dehydroquinate</name>
        <dbReference type="ChEBI" id="CHEBI:32364"/>
    </ligand>
</feature>
<evidence type="ECO:0000255" key="1">
    <source>
        <dbReference type="HAMAP-Rule" id="MF_00214"/>
    </source>
</evidence>